<reference key="1">
    <citation type="submission" date="2011-02" db="EMBL/GenBank/DDBJ databases">
        <title>Complete sequence of Methanobacterium sp. AL-21.</title>
        <authorList>
            <consortium name="US DOE Joint Genome Institute"/>
            <person name="Lucas S."/>
            <person name="Copeland A."/>
            <person name="Lapidus A."/>
            <person name="Cheng J.-F."/>
            <person name="Goodwin L."/>
            <person name="Pitluck S."/>
            <person name="Chertkov O."/>
            <person name="Detter J.C."/>
            <person name="Han C."/>
            <person name="Tapia R."/>
            <person name="Land M."/>
            <person name="Hauser L."/>
            <person name="Kyrpides N."/>
            <person name="Ivanova N."/>
            <person name="Mikhailova N."/>
            <person name="Pagani I."/>
            <person name="Cadillo-Quiroz H."/>
            <person name="Imachi H."/>
            <person name="Zinder S."/>
            <person name="Liu W."/>
            <person name="Woyke T."/>
        </authorList>
    </citation>
    <scope>NUCLEOTIDE SEQUENCE [LARGE SCALE GENOMIC DNA]</scope>
    <source>
        <strain>AL-21</strain>
    </source>
</reference>
<keyword id="KW-0963">Cytoplasm</keyword>
<keyword id="KW-0328">Glycosyltransferase</keyword>
<keyword id="KW-0660">Purine salvage</keyword>
<keyword id="KW-1185">Reference proteome</keyword>
<keyword id="KW-0808">Transferase</keyword>
<proteinExistence type="inferred from homology"/>
<organism>
    <name type="scientific">Methanobacterium lacus (strain AL-21)</name>
    <dbReference type="NCBI Taxonomy" id="877455"/>
    <lineage>
        <taxon>Archaea</taxon>
        <taxon>Methanobacteriati</taxon>
        <taxon>Methanobacteriota</taxon>
        <taxon>Methanomada group</taxon>
        <taxon>Methanobacteria</taxon>
        <taxon>Methanobacteriales</taxon>
        <taxon>Methanobacteriaceae</taxon>
        <taxon>Methanobacterium</taxon>
    </lineage>
</organism>
<comment type="function">
    <text evidence="1">Catalyzes a salvage reaction resulting in the formation of IMP that is energically less costly than de novo synthesis.</text>
</comment>
<comment type="catalytic activity">
    <reaction evidence="1">
        <text>IMP + diphosphate = hypoxanthine + 5-phospho-alpha-D-ribose 1-diphosphate</text>
        <dbReference type="Rhea" id="RHEA:17973"/>
        <dbReference type="ChEBI" id="CHEBI:17368"/>
        <dbReference type="ChEBI" id="CHEBI:33019"/>
        <dbReference type="ChEBI" id="CHEBI:58017"/>
        <dbReference type="ChEBI" id="CHEBI:58053"/>
        <dbReference type="EC" id="2.4.2.8"/>
    </reaction>
</comment>
<comment type="catalytic activity">
    <reaction evidence="1">
        <text>GMP + diphosphate = guanine + 5-phospho-alpha-D-ribose 1-diphosphate</text>
        <dbReference type="Rhea" id="RHEA:25424"/>
        <dbReference type="ChEBI" id="CHEBI:16235"/>
        <dbReference type="ChEBI" id="CHEBI:33019"/>
        <dbReference type="ChEBI" id="CHEBI:58017"/>
        <dbReference type="ChEBI" id="CHEBI:58115"/>
        <dbReference type="EC" id="2.4.2.8"/>
    </reaction>
</comment>
<comment type="pathway">
    <text evidence="1">Purine metabolism; IMP biosynthesis via salvage pathway; IMP from hypoxanthine: step 1/1.</text>
</comment>
<comment type="subunit">
    <text evidence="1">Homodimer.</text>
</comment>
<comment type="subcellular location">
    <subcellularLocation>
        <location evidence="1">Cytoplasm</location>
    </subcellularLocation>
</comment>
<comment type="similarity">
    <text evidence="1">Belongs to the purine/pyrimidine phosphoribosyltransferase family. Archaeal HPRT subfamily.</text>
</comment>
<gene>
    <name evidence="1" type="primary">hpt</name>
    <name type="ordered locus">Metbo_0197</name>
</gene>
<accession>F0T7W2</accession>
<name>HPRT_METLA</name>
<evidence type="ECO:0000255" key="1">
    <source>
        <dbReference type="HAMAP-Rule" id="MF_01467"/>
    </source>
</evidence>
<dbReference type="EC" id="2.4.2.8" evidence="1"/>
<dbReference type="EMBL" id="CP002551">
    <property type="protein sequence ID" value="ADZ08449.1"/>
    <property type="molecule type" value="Genomic_DNA"/>
</dbReference>
<dbReference type="RefSeq" id="WP_013643800.1">
    <property type="nucleotide sequence ID" value="NC_015216.1"/>
</dbReference>
<dbReference type="SMR" id="F0T7W2"/>
<dbReference type="STRING" id="877455.Metbo_0197"/>
<dbReference type="GeneID" id="10276623"/>
<dbReference type="KEGG" id="mel:Metbo_0197"/>
<dbReference type="eggNOG" id="arCOG00030">
    <property type="taxonomic scope" value="Archaea"/>
</dbReference>
<dbReference type="HOGENOM" id="CLU_126376_0_0_2"/>
<dbReference type="OrthoDB" id="8323at2157"/>
<dbReference type="UniPathway" id="UPA00591">
    <property type="reaction ID" value="UER00648"/>
</dbReference>
<dbReference type="Proteomes" id="UP000007490">
    <property type="component" value="Chromosome"/>
</dbReference>
<dbReference type="GO" id="GO:0005737">
    <property type="term" value="C:cytoplasm"/>
    <property type="evidence" value="ECO:0007669"/>
    <property type="project" value="UniProtKB-SubCell"/>
</dbReference>
<dbReference type="GO" id="GO:0052657">
    <property type="term" value="F:guanine phosphoribosyltransferase activity"/>
    <property type="evidence" value="ECO:0007669"/>
    <property type="project" value="RHEA"/>
</dbReference>
<dbReference type="GO" id="GO:0004422">
    <property type="term" value="F:hypoxanthine phosphoribosyltransferase activity"/>
    <property type="evidence" value="ECO:0007669"/>
    <property type="project" value="UniProtKB-UniRule"/>
</dbReference>
<dbReference type="GO" id="GO:0032264">
    <property type="term" value="P:IMP salvage"/>
    <property type="evidence" value="ECO:0007669"/>
    <property type="project" value="UniProtKB-UniRule"/>
</dbReference>
<dbReference type="GO" id="GO:0006166">
    <property type="term" value="P:purine ribonucleoside salvage"/>
    <property type="evidence" value="ECO:0007669"/>
    <property type="project" value="UniProtKB-KW"/>
</dbReference>
<dbReference type="CDD" id="cd06223">
    <property type="entry name" value="PRTases_typeI"/>
    <property type="match status" value="1"/>
</dbReference>
<dbReference type="Gene3D" id="3.40.50.2020">
    <property type="match status" value="1"/>
</dbReference>
<dbReference type="HAMAP" id="MF_01467">
    <property type="entry name" value="Hypx_phosphoribosyltr"/>
    <property type="match status" value="1"/>
</dbReference>
<dbReference type="InterPro" id="IPR026597">
    <property type="entry name" value="HGPRTase-like"/>
</dbReference>
<dbReference type="InterPro" id="IPR000836">
    <property type="entry name" value="PRibTrfase_dom"/>
</dbReference>
<dbReference type="InterPro" id="IPR029057">
    <property type="entry name" value="PRTase-like"/>
</dbReference>
<dbReference type="InterPro" id="IPR050118">
    <property type="entry name" value="Pur/Pyrimidine_PRTase"/>
</dbReference>
<dbReference type="NCBIfam" id="NF040646">
    <property type="entry name" value="HPT_Archaea"/>
    <property type="match status" value="1"/>
</dbReference>
<dbReference type="NCBIfam" id="NF002635">
    <property type="entry name" value="PRK02304.1-4"/>
    <property type="match status" value="1"/>
</dbReference>
<dbReference type="PANTHER" id="PTHR43864">
    <property type="entry name" value="HYPOXANTHINE/GUANINE PHOSPHORIBOSYLTRANSFERASE"/>
    <property type="match status" value="1"/>
</dbReference>
<dbReference type="PANTHER" id="PTHR43864:SF1">
    <property type="entry name" value="XANTHINE PHOSPHORIBOSYLTRANSFERASE"/>
    <property type="match status" value="1"/>
</dbReference>
<dbReference type="Pfam" id="PF00156">
    <property type="entry name" value="Pribosyltran"/>
    <property type="match status" value="1"/>
</dbReference>
<dbReference type="SUPFAM" id="SSF53271">
    <property type="entry name" value="PRTase-like"/>
    <property type="match status" value="1"/>
</dbReference>
<dbReference type="PROSITE" id="PS00103">
    <property type="entry name" value="PUR_PYR_PR_TRANSFER"/>
    <property type="match status" value="1"/>
</dbReference>
<sequence>MFEKLKISLIEAPIIKKGDYNYFVHPITDGVPLVDPDVLKEAAEGIKKFGNLNVDKIVCVEAMGIHIATALSIITGIPFVVIRKRQYGLEGEVAVHQITGYSHGELYINGLKKGDKIILVDDVVSTGGTMIAVLKAMEKMGIEIVDVFAIVEKGEGKYIVEGETGFEVKSLVKVNVVDGKVQIEGSRDEN</sequence>
<feature type="chain" id="PRO_0000415463" description="Hypoxanthine/guanine phosphoribosyltransferase">
    <location>
        <begin position="1"/>
        <end position="190"/>
    </location>
</feature>
<protein>
    <recommendedName>
        <fullName evidence="1">Hypoxanthine/guanine phosphoribosyltransferase</fullName>
        <shortName evidence="1">HGPRTase</shortName>
        <ecNumber evidence="1">2.4.2.8</ecNumber>
    </recommendedName>
</protein>